<comment type="function">
    <text evidence="3">Guanine nucleotide-binding proteins (G proteins) function as transducers in numerous signaling pathways controlled by G protein-coupled receptors (GPCRs). Signaling involves the activation of adenylyl cyclases, resulting in increased levels of the signaling molecule cAMP. GNAS functions downstream of several GPCRs, including beta-adrenergic receptors. Stimulates the Ras signaling pathway via RAPGEF2.</text>
</comment>
<comment type="subunit">
    <text evidence="2 3">Heterotrimeric G proteins are composed of 3 units; alpha, beta and gamma. The alpha chain contains the guanine nucleotide binding site (By similarity). Interacts with CRY1; the interaction may block GPCR-mediated regulation of cAMP concentrations. Interacts with ADCY6 and stimulates its adenylyl cyclase activity (By similarity). Interacts with ADCY2 and ADCY5 (By similarity). Stimulates the ADCY5 adenylyl cyclase activity (By similarity). Interaction with SASH1 (By similarity).</text>
</comment>
<comment type="subcellular location">
    <subcellularLocation>
        <location evidence="4">Cell membrane</location>
        <topology evidence="4">Lipid-anchor</topology>
    </subcellularLocation>
</comment>
<comment type="similarity">
    <text evidence="7">Belongs to the G-alpha family. G(s) subfamily.</text>
</comment>
<feature type="initiator methionine" description="Removed">
    <location>
        <position position="1"/>
    </location>
</feature>
<feature type="chain" id="PRO_0000203722" description="Guanine nucleotide-binding protein G(s) subunit alpha">
    <location>
        <begin position="2"/>
        <end position="394"/>
    </location>
</feature>
<feature type="domain" description="G-alpha" evidence="5">
    <location>
        <begin position="39"/>
        <end position="394"/>
    </location>
</feature>
<feature type="region of interest" description="Disordered" evidence="6">
    <location>
        <begin position="1"/>
        <end position="23"/>
    </location>
</feature>
<feature type="region of interest" description="G1 motif" evidence="5">
    <location>
        <begin position="42"/>
        <end position="55"/>
    </location>
</feature>
<feature type="region of interest" description="Disordered" evidence="6">
    <location>
        <begin position="68"/>
        <end position="90"/>
    </location>
</feature>
<feature type="region of interest" description="G2 motif" evidence="5">
    <location>
        <begin position="196"/>
        <end position="204"/>
    </location>
</feature>
<feature type="region of interest" description="G3 motif" evidence="5">
    <location>
        <begin position="219"/>
        <end position="228"/>
    </location>
</feature>
<feature type="region of interest" description="G4 motif" evidence="5">
    <location>
        <begin position="288"/>
        <end position="295"/>
    </location>
</feature>
<feature type="region of interest" description="G5 motif" evidence="5">
    <location>
        <begin position="364"/>
        <end position="369"/>
    </location>
</feature>
<feature type="compositionally biased region" description="Basic and acidic residues" evidence="6">
    <location>
        <begin position="8"/>
        <end position="23"/>
    </location>
</feature>
<feature type="binding site" evidence="2">
    <location>
        <begin position="47"/>
        <end position="55"/>
    </location>
    <ligand>
        <name>GTP</name>
        <dbReference type="ChEBI" id="CHEBI:37565"/>
    </ligand>
</feature>
<feature type="binding site" evidence="2">
    <location>
        <position position="54"/>
    </location>
    <ligand>
        <name>Mg(2+)</name>
        <dbReference type="ChEBI" id="CHEBI:18420"/>
    </ligand>
</feature>
<feature type="binding site" evidence="2">
    <location>
        <begin position="197"/>
        <end position="204"/>
    </location>
    <ligand>
        <name>GTP</name>
        <dbReference type="ChEBI" id="CHEBI:37565"/>
    </ligand>
</feature>
<feature type="binding site" evidence="2">
    <location>
        <position position="204"/>
    </location>
    <ligand>
        <name>Mg(2+)</name>
        <dbReference type="ChEBI" id="CHEBI:18420"/>
    </ligand>
</feature>
<feature type="binding site" evidence="2">
    <location>
        <begin position="223"/>
        <end position="227"/>
    </location>
    <ligand>
        <name>GTP</name>
        <dbReference type="ChEBI" id="CHEBI:37565"/>
    </ligand>
</feature>
<feature type="binding site" evidence="2">
    <location>
        <begin position="292"/>
        <end position="295"/>
    </location>
    <ligand>
        <name>GTP</name>
        <dbReference type="ChEBI" id="CHEBI:37565"/>
    </ligand>
</feature>
<feature type="binding site" evidence="2">
    <location>
        <position position="366"/>
    </location>
    <ligand>
        <name>GTP</name>
        <dbReference type="ChEBI" id="CHEBI:37565"/>
    </ligand>
</feature>
<feature type="lipid moiety-binding region" description="N-palmitoyl glycine" evidence="2">
    <location>
        <position position="2"/>
    </location>
</feature>
<feature type="lipid moiety-binding region" description="S-palmitoyl cysteine" evidence="1">
    <location>
        <position position="3"/>
    </location>
</feature>
<gene>
    <name type="primary">GNAS</name>
</gene>
<accession>P63093</accession>
<accession>P04894</accession>
<accession>P08755</accession>
<name>GNAS_MESAU</name>
<keyword id="KW-1003">Cell membrane</keyword>
<keyword id="KW-0342">GTP-binding</keyword>
<keyword id="KW-0449">Lipoprotein</keyword>
<keyword id="KW-0460">Magnesium</keyword>
<keyword id="KW-0472">Membrane</keyword>
<keyword id="KW-0479">Metal-binding</keyword>
<keyword id="KW-0547">Nucleotide-binding</keyword>
<keyword id="KW-0564">Palmitate</keyword>
<keyword id="KW-1185">Reference proteome</keyword>
<keyword id="KW-0807">Transducer</keyword>
<sequence length="394" mass="45664">MGCLGNSKTEDQRNEEKAQREANKKIEKQLQKDKQVYRATHRLLLLGAGESGKSTIVKQMRILHVNGFNGEGGEEDPQAARSNSDGEKATKVQDIKNNLKEAIETIVAAMSNLVPPVELANPENQFRVDYILSVMNVPNFDFPPEFYEHAKALWEDEGVRACYERSNEYQLIDCAQYFLDKIDVIKQADYVPSDQDLLRCRVLTSGIFETKFQVDKVNFHMFDVGGQRDERRKWIQCFNDVTAIIFVVASSSYNMVIREDNQTNRLQEALNLFKSIWNNRWLRTISVILFLNKQDLLAEKVLAGKSKIEDYFPEFARYTTPEDATPEPGEDPRVTRAKYFIRDEFLRISTASGDGRHYCYPHFTCAVDTENIRRVFNDCRDIIQRMHLRQYELL</sequence>
<proteinExistence type="evidence at transcript level"/>
<reference key="1">
    <citation type="journal article" date="1990" name="Nucleic Acids Res.">
        <title>cDNA sequence for the alpha subunit of the guanine nucleotide-binding protein that stimulates adenylyl cyclase (Gs alpha) in Syrian hamster heart (Mesocricetus auratus).</title>
        <authorList>
            <person name="van Dop C."/>
            <person name="Conner D.A."/>
            <person name="Feldman A.M."/>
        </authorList>
    </citation>
    <scope>NUCLEOTIDE SEQUENCE [MRNA]</scope>
    <source>
        <tissue>Heart</tissue>
    </source>
</reference>
<organism>
    <name type="scientific">Mesocricetus auratus</name>
    <name type="common">Golden hamster</name>
    <dbReference type="NCBI Taxonomy" id="10036"/>
    <lineage>
        <taxon>Eukaryota</taxon>
        <taxon>Metazoa</taxon>
        <taxon>Chordata</taxon>
        <taxon>Craniata</taxon>
        <taxon>Vertebrata</taxon>
        <taxon>Euteleostomi</taxon>
        <taxon>Mammalia</taxon>
        <taxon>Eutheria</taxon>
        <taxon>Euarchontoglires</taxon>
        <taxon>Glires</taxon>
        <taxon>Rodentia</taxon>
        <taxon>Myomorpha</taxon>
        <taxon>Muroidea</taxon>
        <taxon>Cricetidae</taxon>
        <taxon>Cricetinae</taxon>
        <taxon>Mesocricetus</taxon>
    </lineage>
</organism>
<evidence type="ECO:0000250" key="1"/>
<evidence type="ECO:0000250" key="2">
    <source>
        <dbReference type="UniProtKB" id="P04896"/>
    </source>
</evidence>
<evidence type="ECO:0000250" key="3">
    <source>
        <dbReference type="UniProtKB" id="P63092"/>
    </source>
</evidence>
<evidence type="ECO:0000250" key="4">
    <source>
        <dbReference type="UniProtKB" id="P63094"/>
    </source>
</evidence>
<evidence type="ECO:0000255" key="5">
    <source>
        <dbReference type="PROSITE-ProRule" id="PRU01230"/>
    </source>
</evidence>
<evidence type="ECO:0000256" key="6">
    <source>
        <dbReference type="SAM" id="MobiDB-lite"/>
    </source>
</evidence>
<evidence type="ECO:0000305" key="7"/>
<protein>
    <recommendedName>
        <fullName>Guanine nucleotide-binding protein G(s) subunit alpha</fullName>
    </recommendedName>
    <alternativeName>
        <fullName>Adenylate cyclase-stimulating G alpha protein</fullName>
    </alternativeName>
</protein>
<dbReference type="EMBL" id="X53139">
    <property type="protein sequence ID" value="CAA37299.1"/>
    <property type="molecule type" value="mRNA"/>
</dbReference>
<dbReference type="PIR" id="S10508">
    <property type="entry name" value="RGHYA2"/>
</dbReference>
<dbReference type="RefSeq" id="NP_001268870.1">
    <property type="nucleotide sequence ID" value="NM_001281941.1"/>
</dbReference>
<dbReference type="SMR" id="P63093"/>
<dbReference type="STRING" id="10036.ENSMAUP00000020825"/>
<dbReference type="Ensembl" id="ENSMAUT00000024819">
    <property type="protein sequence ID" value="ENSMAUP00000020825"/>
    <property type="gene ID" value="ENSMAUG00000018730"/>
</dbReference>
<dbReference type="GeneID" id="101834728"/>
<dbReference type="KEGG" id="maua:101834728"/>
<dbReference type="CTD" id="2778"/>
<dbReference type="eggNOG" id="KOG0099">
    <property type="taxonomic scope" value="Eukaryota"/>
</dbReference>
<dbReference type="OrthoDB" id="5817230at2759"/>
<dbReference type="Proteomes" id="UP000189706">
    <property type="component" value="Unplaced"/>
</dbReference>
<dbReference type="GO" id="GO:0005829">
    <property type="term" value="C:cytosol"/>
    <property type="evidence" value="ECO:0007669"/>
    <property type="project" value="Ensembl"/>
</dbReference>
<dbReference type="GO" id="GO:0005834">
    <property type="term" value="C:heterotrimeric G-protein complex"/>
    <property type="evidence" value="ECO:0007669"/>
    <property type="project" value="TreeGrafter"/>
</dbReference>
<dbReference type="GO" id="GO:0032588">
    <property type="term" value="C:trans-Golgi network membrane"/>
    <property type="evidence" value="ECO:0007669"/>
    <property type="project" value="Ensembl"/>
</dbReference>
<dbReference type="GO" id="GO:0010856">
    <property type="term" value="F:adenylate cyclase activator activity"/>
    <property type="evidence" value="ECO:0000250"/>
    <property type="project" value="UniProtKB"/>
</dbReference>
<dbReference type="GO" id="GO:0031698">
    <property type="term" value="F:beta-2 adrenergic receptor binding"/>
    <property type="evidence" value="ECO:0007669"/>
    <property type="project" value="TreeGrafter"/>
</dbReference>
<dbReference type="GO" id="GO:0051430">
    <property type="term" value="F:corticotropin-releasing hormone receptor 1 binding"/>
    <property type="evidence" value="ECO:0007669"/>
    <property type="project" value="TreeGrafter"/>
</dbReference>
<dbReference type="GO" id="GO:0031748">
    <property type="term" value="F:D1 dopamine receptor binding"/>
    <property type="evidence" value="ECO:0007669"/>
    <property type="project" value="Ensembl"/>
</dbReference>
<dbReference type="GO" id="GO:0003925">
    <property type="term" value="F:G protein activity"/>
    <property type="evidence" value="ECO:0007669"/>
    <property type="project" value="Ensembl"/>
</dbReference>
<dbReference type="GO" id="GO:0031683">
    <property type="term" value="F:G-protein beta/gamma-subunit complex binding"/>
    <property type="evidence" value="ECO:0007669"/>
    <property type="project" value="InterPro"/>
</dbReference>
<dbReference type="GO" id="GO:0005525">
    <property type="term" value="F:GTP binding"/>
    <property type="evidence" value="ECO:0007669"/>
    <property type="project" value="UniProtKB-KW"/>
</dbReference>
<dbReference type="GO" id="GO:0005159">
    <property type="term" value="F:insulin-like growth factor receptor binding"/>
    <property type="evidence" value="ECO:0007669"/>
    <property type="project" value="TreeGrafter"/>
</dbReference>
<dbReference type="GO" id="GO:0035255">
    <property type="term" value="F:ionotropic glutamate receptor binding"/>
    <property type="evidence" value="ECO:0007669"/>
    <property type="project" value="TreeGrafter"/>
</dbReference>
<dbReference type="GO" id="GO:0046872">
    <property type="term" value="F:metal ion binding"/>
    <property type="evidence" value="ECO:0007669"/>
    <property type="project" value="UniProtKB-KW"/>
</dbReference>
<dbReference type="GO" id="GO:0031852">
    <property type="term" value="F:mu-type opioid receptor binding"/>
    <property type="evidence" value="ECO:0007669"/>
    <property type="project" value="TreeGrafter"/>
</dbReference>
<dbReference type="GO" id="GO:0071880">
    <property type="term" value="P:adenylate cyclase-activating adrenergic receptor signaling pathway"/>
    <property type="evidence" value="ECO:0000250"/>
    <property type="project" value="UniProtKB"/>
</dbReference>
<dbReference type="GO" id="GO:0007191">
    <property type="term" value="P:adenylate cyclase-activating dopamine receptor signaling pathway"/>
    <property type="evidence" value="ECO:0007669"/>
    <property type="project" value="TreeGrafter"/>
</dbReference>
<dbReference type="GO" id="GO:0007189">
    <property type="term" value="P:adenylate cyclase-activating G protein-coupled receptor signaling pathway"/>
    <property type="evidence" value="ECO:0000250"/>
    <property type="project" value="UniProtKB"/>
</dbReference>
<dbReference type="GO" id="GO:0060348">
    <property type="term" value="P:bone development"/>
    <property type="evidence" value="ECO:0007669"/>
    <property type="project" value="Ensembl"/>
</dbReference>
<dbReference type="GO" id="GO:0050890">
    <property type="term" value="P:cognition"/>
    <property type="evidence" value="ECO:0007669"/>
    <property type="project" value="Ensembl"/>
</dbReference>
<dbReference type="GO" id="GO:0048589">
    <property type="term" value="P:developmental growth"/>
    <property type="evidence" value="ECO:0007669"/>
    <property type="project" value="Ensembl"/>
</dbReference>
<dbReference type="GO" id="GO:0060789">
    <property type="term" value="P:hair follicle placode formation"/>
    <property type="evidence" value="ECO:0007669"/>
    <property type="project" value="Ensembl"/>
</dbReference>
<dbReference type="GO" id="GO:0070527">
    <property type="term" value="P:platelet aggregation"/>
    <property type="evidence" value="ECO:0007669"/>
    <property type="project" value="Ensembl"/>
</dbReference>
<dbReference type="GO" id="GO:0007606">
    <property type="term" value="P:sensory perception of chemical stimulus"/>
    <property type="evidence" value="ECO:0007669"/>
    <property type="project" value="TreeGrafter"/>
</dbReference>
<dbReference type="CDD" id="cd00066">
    <property type="entry name" value="G-alpha"/>
    <property type="match status" value="1"/>
</dbReference>
<dbReference type="FunFam" id="1.10.400.10:FF:000003">
    <property type="entry name" value="Guanine nucleotide-binding protein G(S) subunit alpha"/>
    <property type="match status" value="1"/>
</dbReference>
<dbReference type="FunFam" id="3.40.50.300:FF:006178">
    <property type="entry name" value="Guanine nucleotide-binding protein G(s) subunit alpha isoforms short"/>
    <property type="match status" value="2"/>
</dbReference>
<dbReference type="Gene3D" id="1.10.400.10">
    <property type="entry name" value="GI Alpha 1, domain 2-like"/>
    <property type="match status" value="1"/>
</dbReference>
<dbReference type="Gene3D" id="3.40.50.300">
    <property type="entry name" value="P-loop containing nucleotide triphosphate hydrolases"/>
    <property type="match status" value="1"/>
</dbReference>
<dbReference type="InterPro" id="IPR000367">
    <property type="entry name" value="Gprotein_alpha_S"/>
</dbReference>
<dbReference type="InterPro" id="IPR001019">
    <property type="entry name" value="Gprotein_alpha_su"/>
</dbReference>
<dbReference type="InterPro" id="IPR011025">
    <property type="entry name" value="GproteinA_insert"/>
</dbReference>
<dbReference type="InterPro" id="IPR027417">
    <property type="entry name" value="P-loop_NTPase"/>
</dbReference>
<dbReference type="PANTHER" id="PTHR10218">
    <property type="entry name" value="GTP-BINDING PROTEIN ALPHA SUBUNIT"/>
    <property type="match status" value="1"/>
</dbReference>
<dbReference type="PANTHER" id="PTHR10218:SF357">
    <property type="entry name" value="GUANINE NUCLEOTIDE-BINDING PROTEIN G(S) SUBUNIT ALPHA"/>
    <property type="match status" value="1"/>
</dbReference>
<dbReference type="Pfam" id="PF00503">
    <property type="entry name" value="G-alpha"/>
    <property type="match status" value="1"/>
</dbReference>
<dbReference type="PRINTS" id="PR00318">
    <property type="entry name" value="GPROTEINA"/>
</dbReference>
<dbReference type="PRINTS" id="PR00443">
    <property type="entry name" value="GPROTEINAS"/>
</dbReference>
<dbReference type="SMART" id="SM00275">
    <property type="entry name" value="G_alpha"/>
    <property type="match status" value="1"/>
</dbReference>
<dbReference type="SUPFAM" id="SSF52540">
    <property type="entry name" value="P-loop containing nucleoside triphosphate hydrolases"/>
    <property type="match status" value="1"/>
</dbReference>
<dbReference type="SUPFAM" id="SSF47895">
    <property type="entry name" value="Transducin (alpha subunit), insertion domain"/>
    <property type="match status" value="1"/>
</dbReference>
<dbReference type="PROSITE" id="PS51882">
    <property type="entry name" value="G_ALPHA"/>
    <property type="match status" value="1"/>
</dbReference>